<evidence type="ECO:0000256" key="1">
    <source>
        <dbReference type="SAM" id="MobiDB-lite"/>
    </source>
</evidence>
<evidence type="ECO:0000269" key="2">
    <source>
    </source>
</evidence>
<evidence type="ECO:0000303" key="3">
    <source>
    </source>
</evidence>
<evidence type="ECO:0000305" key="4"/>
<evidence type="ECO:0007744" key="5">
    <source>
    </source>
</evidence>
<evidence type="ECO:0007744" key="6">
    <source>
    </source>
</evidence>
<evidence type="ECO:0007744" key="7">
    <source>
    </source>
</evidence>
<evidence type="ECO:0007744" key="8">
    <source>
    </source>
</evidence>
<evidence type="ECO:0007744" key="9">
    <source>
    </source>
</evidence>
<evidence type="ECO:0007744" key="10">
    <source>
    </source>
</evidence>
<evidence type="ECO:0007744" key="11">
    <source>
    </source>
</evidence>
<evidence type="ECO:0007744" key="12">
    <source>
    </source>
</evidence>
<evidence type="ECO:0007744" key="13">
    <source>
    </source>
</evidence>
<evidence type="ECO:0007744" key="14">
    <source>
    </source>
</evidence>
<evidence type="ECO:0007744" key="15">
    <source>
    </source>
</evidence>
<evidence type="ECO:0007744" key="16">
    <source>
    </source>
</evidence>
<evidence type="ECO:0007829" key="17">
    <source>
        <dbReference type="PDB" id="1YYB"/>
    </source>
</evidence>
<evidence type="ECO:0007829" key="18">
    <source>
        <dbReference type="PDB" id="2CRU"/>
    </source>
</evidence>
<evidence type="ECO:0007829" key="19">
    <source>
        <dbReference type="PDB" id="2K6B"/>
    </source>
</evidence>
<accession>O14737</accession>
<accession>B4DE64</accession>
<accession>Q53YC9</accession>
<accession>Q6IB70</accession>
<name>PDCD5_HUMAN</name>
<reference key="1">
    <citation type="journal article" date="1999" name="Biochem. Biophys. Res. Commun.">
        <title>TFAR19, a novel apoptosis-related gene cloned from human leukemia cell line TF-1, could enhance apoptosis of some tumor cells induced by growth factor withdrawal.</title>
        <authorList>
            <person name="Liu H.T."/>
            <person name="Wang Y.G."/>
            <person name="Zhang Y.M."/>
            <person name="Song Q.S."/>
            <person name="Di C.H."/>
            <person name="Chen G."/>
            <person name="Tang J."/>
            <person name="Ma D.L."/>
        </authorList>
    </citation>
    <scope>NUCLEOTIDE SEQUENCE [MRNA] (ISOFORM 1)</scope>
    <source>
        <tissue>Erythroleukemia</tissue>
    </source>
</reference>
<reference key="2">
    <citation type="submission" date="2003-05" db="EMBL/GenBank/DDBJ databases">
        <title>Cloning of human full-length CDSs in BD Creator(TM) system donor vector.</title>
        <authorList>
            <person name="Kalnine N."/>
            <person name="Chen X."/>
            <person name="Rolfs A."/>
            <person name="Halleck A."/>
            <person name="Hines L."/>
            <person name="Eisenstein S."/>
            <person name="Koundinya M."/>
            <person name="Raphael J."/>
            <person name="Moreira D."/>
            <person name="Kelley T."/>
            <person name="LaBaer J."/>
            <person name="Lin Y."/>
            <person name="Phelan M."/>
            <person name="Farmer A."/>
        </authorList>
    </citation>
    <scope>NUCLEOTIDE SEQUENCE [LARGE SCALE MRNA] (ISOFORM 1)</scope>
</reference>
<reference key="3">
    <citation type="journal article" date="2004" name="Nat. Genet.">
        <title>Complete sequencing and characterization of 21,243 full-length human cDNAs.</title>
        <authorList>
            <person name="Ota T."/>
            <person name="Suzuki Y."/>
            <person name="Nishikawa T."/>
            <person name="Otsuki T."/>
            <person name="Sugiyama T."/>
            <person name="Irie R."/>
            <person name="Wakamatsu A."/>
            <person name="Hayashi K."/>
            <person name="Sato H."/>
            <person name="Nagai K."/>
            <person name="Kimura K."/>
            <person name="Makita H."/>
            <person name="Sekine M."/>
            <person name="Obayashi M."/>
            <person name="Nishi T."/>
            <person name="Shibahara T."/>
            <person name="Tanaka T."/>
            <person name="Ishii S."/>
            <person name="Yamamoto J."/>
            <person name="Saito K."/>
            <person name="Kawai Y."/>
            <person name="Isono Y."/>
            <person name="Nakamura Y."/>
            <person name="Nagahari K."/>
            <person name="Murakami K."/>
            <person name="Yasuda T."/>
            <person name="Iwayanagi T."/>
            <person name="Wagatsuma M."/>
            <person name="Shiratori A."/>
            <person name="Sudo H."/>
            <person name="Hosoiri T."/>
            <person name="Kaku Y."/>
            <person name="Kodaira H."/>
            <person name="Kondo H."/>
            <person name="Sugawara M."/>
            <person name="Takahashi M."/>
            <person name="Kanda K."/>
            <person name="Yokoi T."/>
            <person name="Furuya T."/>
            <person name="Kikkawa E."/>
            <person name="Omura Y."/>
            <person name="Abe K."/>
            <person name="Kamihara K."/>
            <person name="Katsuta N."/>
            <person name="Sato K."/>
            <person name="Tanikawa M."/>
            <person name="Yamazaki M."/>
            <person name="Ninomiya K."/>
            <person name="Ishibashi T."/>
            <person name="Yamashita H."/>
            <person name="Murakawa K."/>
            <person name="Fujimori K."/>
            <person name="Tanai H."/>
            <person name="Kimata M."/>
            <person name="Watanabe M."/>
            <person name="Hiraoka S."/>
            <person name="Chiba Y."/>
            <person name="Ishida S."/>
            <person name="Ono Y."/>
            <person name="Takiguchi S."/>
            <person name="Watanabe S."/>
            <person name="Yosida M."/>
            <person name="Hotuta T."/>
            <person name="Kusano J."/>
            <person name="Kanehori K."/>
            <person name="Takahashi-Fujii A."/>
            <person name="Hara H."/>
            <person name="Tanase T.-O."/>
            <person name="Nomura Y."/>
            <person name="Togiya S."/>
            <person name="Komai F."/>
            <person name="Hara R."/>
            <person name="Takeuchi K."/>
            <person name="Arita M."/>
            <person name="Imose N."/>
            <person name="Musashino K."/>
            <person name="Yuuki H."/>
            <person name="Oshima A."/>
            <person name="Sasaki N."/>
            <person name="Aotsuka S."/>
            <person name="Yoshikawa Y."/>
            <person name="Matsunawa H."/>
            <person name="Ichihara T."/>
            <person name="Shiohata N."/>
            <person name="Sano S."/>
            <person name="Moriya S."/>
            <person name="Momiyama H."/>
            <person name="Satoh N."/>
            <person name="Takami S."/>
            <person name="Terashima Y."/>
            <person name="Suzuki O."/>
            <person name="Nakagawa S."/>
            <person name="Senoh A."/>
            <person name="Mizoguchi H."/>
            <person name="Goto Y."/>
            <person name="Shimizu F."/>
            <person name="Wakebe H."/>
            <person name="Hishigaki H."/>
            <person name="Watanabe T."/>
            <person name="Sugiyama A."/>
            <person name="Takemoto M."/>
            <person name="Kawakami B."/>
            <person name="Yamazaki M."/>
            <person name="Watanabe K."/>
            <person name="Kumagai A."/>
            <person name="Itakura S."/>
            <person name="Fukuzumi Y."/>
            <person name="Fujimori Y."/>
            <person name="Komiyama M."/>
            <person name="Tashiro H."/>
            <person name="Tanigami A."/>
            <person name="Fujiwara T."/>
            <person name="Ono T."/>
            <person name="Yamada K."/>
            <person name="Fujii Y."/>
            <person name="Ozaki K."/>
            <person name="Hirao M."/>
            <person name="Ohmori Y."/>
            <person name="Kawabata A."/>
            <person name="Hikiji T."/>
            <person name="Kobatake N."/>
            <person name="Inagaki H."/>
            <person name="Ikema Y."/>
            <person name="Okamoto S."/>
            <person name="Okitani R."/>
            <person name="Kawakami T."/>
            <person name="Noguchi S."/>
            <person name="Itoh T."/>
            <person name="Shigeta K."/>
            <person name="Senba T."/>
            <person name="Matsumura K."/>
            <person name="Nakajima Y."/>
            <person name="Mizuno T."/>
            <person name="Morinaga M."/>
            <person name="Sasaki M."/>
            <person name="Togashi T."/>
            <person name="Oyama M."/>
            <person name="Hata H."/>
            <person name="Watanabe M."/>
            <person name="Komatsu T."/>
            <person name="Mizushima-Sugano J."/>
            <person name="Satoh T."/>
            <person name="Shirai Y."/>
            <person name="Takahashi Y."/>
            <person name="Nakagawa K."/>
            <person name="Okumura K."/>
            <person name="Nagase T."/>
            <person name="Nomura N."/>
            <person name="Kikuchi H."/>
            <person name="Masuho Y."/>
            <person name="Yamashita R."/>
            <person name="Nakai K."/>
            <person name="Yada T."/>
            <person name="Nakamura Y."/>
            <person name="Ohara O."/>
            <person name="Isogai T."/>
            <person name="Sugano S."/>
        </authorList>
    </citation>
    <scope>NUCLEOTIDE SEQUENCE [LARGE SCALE MRNA] (ISOFORM 2)</scope>
    <source>
        <tissue>Cerebellum</tissue>
    </source>
</reference>
<reference key="4">
    <citation type="submission" date="2004-06" db="EMBL/GenBank/DDBJ databases">
        <title>Cloning of human full open reading frames in Gateway(TM) system entry vector (pDONR201).</title>
        <authorList>
            <person name="Ebert L."/>
            <person name="Schick M."/>
            <person name="Neubert P."/>
            <person name="Schatten R."/>
            <person name="Henze S."/>
            <person name="Korn B."/>
        </authorList>
    </citation>
    <scope>NUCLEOTIDE SEQUENCE [LARGE SCALE MRNA] (ISOFORM 1)</scope>
</reference>
<reference key="5">
    <citation type="journal article" date="2004" name="Nature">
        <title>The DNA sequence and biology of human chromosome 19.</title>
        <authorList>
            <person name="Grimwood J."/>
            <person name="Gordon L.A."/>
            <person name="Olsen A.S."/>
            <person name="Terry A."/>
            <person name="Schmutz J."/>
            <person name="Lamerdin J.E."/>
            <person name="Hellsten U."/>
            <person name="Goodstein D."/>
            <person name="Couronne O."/>
            <person name="Tran-Gyamfi M."/>
            <person name="Aerts A."/>
            <person name="Altherr M."/>
            <person name="Ashworth L."/>
            <person name="Bajorek E."/>
            <person name="Black S."/>
            <person name="Branscomb E."/>
            <person name="Caenepeel S."/>
            <person name="Carrano A.V."/>
            <person name="Caoile C."/>
            <person name="Chan Y.M."/>
            <person name="Christensen M."/>
            <person name="Cleland C.A."/>
            <person name="Copeland A."/>
            <person name="Dalin E."/>
            <person name="Dehal P."/>
            <person name="Denys M."/>
            <person name="Detter J.C."/>
            <person name="Escobar J."/>
            <person name="Flowers D."/>
            <person name="Fotopulos D."/>
            <person name="Garcia C."/>
            <person name="Georgescu A.M."/>
            <person name="Glavina T."/>
            <person name="Gomez M."/>
            <person name="Gonzales E."/>
            <person name="Groza M."/>
            <person name="Hammon N."/>
            <person name="Hawkins T."/>
            <person name="Haydu L."/>
            <person name="Ho I."/>
            <person name="Huang W."/>
            <person name="Israni S."/>
            <person name="Jett J."/>
            <person name="Kadner K."/>
            <person name="Kimball H."/>
            <person name="Kobayashi A."/>
            <person name="Larionov V."/>
            <person name="Leem S.-H."/>
            <person name="Lopez F."/>
            <person name="Lou Y."/>
            <person name="Lowry S."/>
            <person name="Malfatti S."/>
            <person name="Martinez D."/>
            <person name="McCready P.M."/>
            <person name="Medina C."/>
            <person name="Morgan J."/>
            <person name="Nelson K."/>
            <person name="Nolan M."/>
            <person name="Ovcharenko I."/>
            <person name="Pitluck S."/>
            <person name="Pollard M."/>
            <person name="Popkie A.P."/>
            <person name="Predki P."/>
            <person name="Quan G."/>
            <person name="Ramirez L."/>
            <person name="Rash S."/>
            <person name="Retterer J."/>
            <person name="Rodriguez A."/>
            <person name="Rogers S."/>
            <person name="Salamov A."/>
            <person name="Salazar A."/>
            <person name="She X."/>
            <person name="Smith D."/>
            <person name="Slezak T."/>
            <person name="Solovyev V."/>
            <person name="Thayer N."/>
            <person name="Tice H."/>
            <person name="Tsai M."/>
            <person name="Ustaszewska A."/>
            <person name="Vo N."/>
            <person name="Wagner M."/>
            <person name="Wheeler J."/>
            <person name="Wu K."/>
            <person name="Xie G."/>
            <person name="Yang J."/>
            <person name="Dubchak I."/>
            <person name="Furey T.S."/>
            <person name="DeJong P."/>
            <person name="Dickson M."/>
            <person name="Gordon D."/>
            <person name="Eichler E.E."/>
            <person name="Pennacchio L.A."/>
            <person name="Richardson P."/>
            <person name="Stubbs L."/>
            <person name="Rokhsar D.S."/>
            <person name="Myers R.M."/>
            <person name="Rubin E.M."/>
            <person name="Lucas S.M."/>
        </authorList>
    </citation>
    <scope>NUCLEOTIDE SEQUENCE [LARGE SCALE GENOMIC DNA]</scope>
</reference>
<reference key="6">
    <citation type="journal article" date="2004" name="Genome Res.">
        <title>The status, quality, and expansion of the NIH full-length cDNA project: the Mammalian Gene Collection (MGC).</title>
        <authorList>
            <consortium name="The MGC Project Team"/>
        </authorList>
    </citation>
    <scope>NUCLEOTIDE SEQUENCE [LARGE SCALE MRNA] (ISOFORM 1)</scope>
    <source>
        <tissue>Lung</tissue>
    </source>
</reference>
<reference key="7">
    <citation type="journal article" date="2003" name="Nat. Biotechnol.">
        <title>Exploring proteomes and analyzing protein processing by mass spectrometric identification of sorted N-terminal peptides.</title>
        <authorList>
            <person name="Gevaert K."/>
            <person name="Goethals M."/>
            <person name="Martens L."/>
            <person name="Van Damme J."/>
            <person name="Staes A."/>
            <person name="Thomas G.R."/>
            <person name="Vandekerckhove J."/>
        </authorList>
    </citation>
    <scope>PROTEIN SEQUENCE OF 2-11</scope>
    <source>
        <tissue>Platelet</tissue>
    </source>
</reference>
<reference key="8">
    <citation type="journal article" date="2006" name="Cell">
        <title>Global, in vivo, and site-specific phosphorylation dynamics in signaling networks.</title>
        <authorList>
            <person name="Olsen J.V."/>
            <person name="Blagoev B."/>
            <person name="Gnad F."/>
            <person name="Macek B."/>
            <person name="Kumar C."/>
            <person name="Mortensen P."/>
            <person name="Mann M."/>
        </authorList>
    </citation>
    <scope>PHOSPHORYLATION [LARGE SCALE ANALYSIS] AT SER-119</scope>
    <scope>IDENTIFICATION BY MASS SPECTROMETRY [LARGE SCALE ANALYSIS]</scope>
    <source>
        <tissue>Cervix carcinoma</tissue>
    </source>
</reference>
<reference key="9">
    <citation type="journal article" date="2008" name="Proc. Natl. Acad. Sci. U.S.A.">
        <title>A quantitative atlas of mitotic phosphorylation.</title>
        <authorList>
            <person name="Dephoure N."/>
            <person name="Zhou C."/>
            <person name="Villen J."/>
            <person name="Beausoleil S.A."/>
            <person name="Bakalarski C.E."/>
            <person name="Elledge S.J."/>
            <person name="Gygi S.P."/>
        </authorList>
    </citation>
    <scope>PHOSPHORYLATION [LARGE SCALE ANALYSIS] AT SER-119</scope>
    <scope>IDENTIFICATION BY MASS SPECTROMETRY [LARGE SCALE ANALYSIS]</scope>
    <source>
        <tissue>Cervix carcinoma</tissue>
    </source>
</reference>
<reference key="10">
    <citation type="journal article" date="2008" name="Proteomics">
        <title>Large-scale phosphoproteome analysis of human liver tissue by enrichment and fractionation of phosphopeptides with strong anion exchange chromatography.</title>
        <authorList>
            <person name="Han G."/>
            <person name="Ye M."/>
            <person name="Zhou H."/>
            <person name="Jiang X."/>
            <person name="Feng S."/>
            <person name="Jiang X."/>
            <person name="Tian R."/>
            <person name="Wan D."/>
            <person name="Zou H."/>
            <person name="Gu J."/>
        </authorList>
    </citation>
    <scope>PHOSPHORYLATION [LARGE SCALE ANALYSIS] AT SER-119</scope>
    <scope>IDENTIFICATION BY MASS SPECTROMETRY [LARGE SCALE ANALYSIS]</scope>
    <source>
        <tissue>Liver</tissue>
    </source>
</reference>
<reference key="11">
    <citation type="journal article" date="2009" name="Anal. Chem.">
        <title>Lys-N and trypsin cover complementary parts of the phosphoproteome in a refined SCX-based approach.</title>
        <authorList>
            <person name="Gauci S."/>
            <person name="Helbig A.O."/>
            <person name="Slijper M."/>
            <person name="Krijgsveld J."/>
            <person name="Heck A.J."/>
            <person name="Mohammed S."/>
        </authorList>
    </citation>
    <scope>ACETYLATION [LARGE SCALE ANALYSIS] AT ALA-2</scope>
    <scope>CLEAVAGE OF INITIATOR METHIONINE [LARGE SCALE ANALYSIS]</scope>
    <scope>IDENTIFICATION BY MASS SPECTROMETRY [LARGE SCALE ANALYSIS]</scope>
</reference>
<reference key="12">
    <citation type="journal article" date="2009" name="Sci. Signal.">
        <title>Quantitative phosphoproteomic analysis of T cell receptor signaling reveals system-wide modulation of protein-protein interactions.</title>
        <authorList>
            <person name="Mayya V."/>
            <person name="Lundgren D.H."/>
            <person name="Hwang S.-I."/>
            <person name="Rezaul K."/>
            <person name="Wu L."/>
            <person name="Eng J.K."/>
            <person name="Rodionov V."/>
            <person name="Han D.K."/>
        </authorList>
    </citation>
    <scope>PHOSPHORYLATION [LARGE SCALE ANALYSIS] AT SER-119</scope>
    <scope>IDENTIFICATION BY MASS SPECTROMETRY [LARGE SCALE ANALYSIS]</scope>
    <source>
        <tissue>Leukemic T-cell</tissue>
    </source>
</reference>
<reference key="13">
    <citation type="journal article" date="2009" name="Science">
        <title>Lysine acetylation targets protein complexes and co-regulates major cellular functions.</title>
        <authorList>
            <person name="Choudhary C."/>
            <person name="Kumar C."/>
            <person name="Gnad F."/>
            <person name="Nielsen M.L."/>
            <person name="Rehman M."/>
            <person name="Walther T.C."/>
            <person name="Olsen J.V."/>
            <person name="Mann M."/>
        </authorList>
    </citation>
    <scope>ACETYLATION [LARGE SCALE ANALYSIS] AT LYS-63</scope>
    <scope>IDENTIFICATION BY MASS SPECTROMETRY [LARGE SCALE ANALYSIS]</scope>
</reference>
<reference key="14">
    <citation type="journal article" date="2010" name="Sci. Signal.">
        <title>Quantitative phosphoproteomics reveals widespread full phosphorylation site occupancy during mitosis.</title>
        <authorList>
            <person name="Olsen J.V."/>
            <person name="Vermeulen M."/>
            <person name="Santamaria A."/>
            <person name="Kumar C."/>
            <person name="Miller M.L."/>
            <person name="Jensen L.J."/>
            <person name="Gnad F."/>
            <person name="Cox J."/>
            <person name="Jensen T.S."/>
            <person name="Nigg E.A."/>
            <person name="Brunak S."/>
            <person name="Mann M."/>
        </authorList>
    </citation>
    <scope>PHOSPHORYLATION [LARGE SCALE ANALYSIS] AT SER-119</scope>
    <scope>IDENTIFICATION BY MASS SPECTROMETRY [LARGE SCALE ANALYSIS]</scope>
    <source>
        <tissue>Cervix carcinoma</tissue>
    </source>
</reference>
<reference key="15">
    <citation type="journal article" date="2011" name="BMC Syst. Biol.">
        <title>Initial characterization of the human central proteome.</title>
        <authorList>
            <person name="Burkard T.R."/>
            <person name="Planyavsky M."/>
            <person name="Kaupe I."/>
            <person name="Breitwieser F.P."/>
            <person name="Buerckstuemmer T."/>
            <person name="Bennett K.L."/>
            <person name="Superti-Furga G."/>
            <person name="Colinge J."/>
        </authorList>
    </citation>
    <scope>IDENTIFICATION BY MASS SPECTROMETRY [LARGE SCALE ANALYSIS]</scope>
</reference>
<reference key="16">
    <citation type="journal article" date="2011" name="Sci. Signal.">
        <title>System-wide temporal characterization of the proteome and phosphoproteome of human embryonic stem cell differentiation.</title>
        <authorList>
            <person name="Rigbolt K.T."/>
            <person name="Prokhorova T.A."/>
            <person name="Akimov V."/>
            <person name="Henningsen J."/>
            <person name="Johansen P.T."/>
            <person name="Kratchmarova I."/>
            <person name="Kassem M."/>
            <person name="Mann M."/>
            <person name="Olsen J.V."/>
            <person name="Blagoev B."/>
        </authorList>
    </citation>
    <scope>PHOSPHORYLATION [LARGE SCALE ANALYSIS] AT SER-119</scope>
    <scope>IDENTIFICATION BY MASS SPECTROMETRY [LARGE SCALE ANALYSIS]</scope>
</reference>
<reference key="17">
    <citation type="journal article" date="2012" name="Mol. Cell. Proteomics">
        <title>Comparative large-scale characterisation of plant vs. mammal proteins reveals similar and idiosyncratic N-alpha acetylation features.</title>
        <authorList>
            <person name="Bienvenut W.V."/>
            <person name="Sumpton D."/>
            <person name="Martinez A."/>
            <person name="Lilla S."/>
            <person name="Espagne C."/>
            <person name="Meinnel T."/>
            <person name="Giglione C."/>
        </authorList>
    </citation>
    <scope>ACETYLATION [LARGE SCALE ANALYSIS] AT ALA-2</scope>
    <scope>CLEAVAGE OF INITIATOR METHIONINE [LARGE SCALE ANALYSIS]</scope>
    <scope>IDENTIFICATION BY MASS SPECTROMETRY [LARGE SCALE ANALYSIS]</scope>
</reference>
<reference key="18">
    <citation type="journal article" date="2012" name="Proc. Natl. Acad. Sci. U.S.A.">
        <title>N-terminal acetylome analyses and functional insights of the N-terminal acetyltransferase NatB.</title>
        <authorList>
            <person name="Van Damme P."/>
            <person name="Lasa M."/>
            <person name="Polevoda B."/>
            <person name="Gazquez C."/>
            <person name="Elosegui-Artola A."/>
            <person name="Kim D.S."/>
            <person name="De Juan-Pardo E."/>
            <person name="Demeyer K."/>
            <person name="Hole K."/>
            <person name="Larrea E."/>
            <person name="Timmerman E."/>
            <person name="Prieto J."/>
            <person name="Arnesen T."/>
            <person name="Sherman F."/>
            <person name="Gevaert K."/>
            <person name="Aldabe R."/>
        </authorList>
    </citation>
    <scope>ACETYLATION [LARGE SCALE ANALYSIS] AT ALA-2</scope>
    <scope>CLEAVAGE OF INITIATOR METHIONINE [LARGE SCALE ANALYSIS]</scope>
    <scope>IDENTIFICATION BY MASS SPECTROMETRY [LARGE SCALE ANALYSIS]</scope>
</reference>
<reference key="19">
    <citation type="journal article" date="2013" name="J. Proteome Res.">
        <title>Toward a comprehensive characterization of a human cancer cell phosphoproteome.</title>
        <authorList>
            <person name="Zhou H."/>
            <person name="Di Palma S."/>
            <person name="Preisinger C."/>
            <person name="Peng M."/>
            <person name="Polat A.N."/>
            <person name="Heck A.J."/>
            <person name="Mohammed S."/>
        </authorList>
    </citation>
    <scope>PHOSPHORYLATION [LARGE SCALE ANALYSIS] AT SER-51 AND SER-119</scope>
    <scope>IDENTIFICATION BY MASS SPECTROMETRY [LARGE SCALE ANALYSIS]</scope>
    <source>
        <tissue>Cervix carcinoma</tissue>
    </source>
</reference>
<reference key="20">
    <citation type="journal article" date="2014" name="J. Proteomics">
        <title>An enzyme assisted RP-RPLC approach for in-depth analysis of human liver phosphoproteome.</title>
        <authorList>
            <person name="Bian Y."/>
            <person name="Song C."/>
            <person name="Cheng K."/>
            <person name="Dong M."/>
            <person name="Wang F."/>
            <person name="Huang J."/>
            <person name="Sun D."/>
            <person name="Wang L."/>
            <person name="Ye M."/>
            <person name="Zou H."/>
        </authorList>
    </citation>
    <scope>PHOSPHORYLATION [LARGE SCALE ANALYSIS] AT SER-119</scope>
    <scope>IDENTIFICATION BY MASS SPECTROMETRY [LARGE SCALE ANALYSIS]</scope>
    <source>
        <tissue>Liver</tissue>
    </source>
</reference>
<reference key="21">
    <citation type="submission" date="2005-11" db="PDB data bank">
        <title>Solution structure of programmed cell death 5.</title>
        <authorList>
            <consortium name="RIKEN structural genomics initiative (RSGI)"/>
        </authorList>
    </citation>
    <scope>STRUCTURE BY NMR OF 9-113</scope>
</reference>
<reference key="22">
    <citation type="journal article" date="2009" name="Arch. Biochem. Biophys.">
        <title>Structure-function correlation of human programmed cell death 5 protein.</title>
        <authorList>
            <person name="Yao H."/>
            <person name="Xu L."/>
            <person name="Feng Y."/>
            <person name="Liu D."/>
            <person name="Chen Y."/>
            <person name="Wang J."/>
        </authorList>
    </citation>
    <scope>STRUCTURE BY NMR OF 2-112</scope>
</reference>
<protein>
    <recommendedName>
        <fullName>Programmed cell death protein 5</fullName>
    </recommendedName>
    <alternativeName>
        <fullName>TF-1 cell apoptosis-related protein 19</fullName>
        <shortName>Protein TFAR19</shortName>
    </alternativeName>
</protein>
<sequence>MADEELEALRRQRLAELQAKHGDPGDAAQQEAKHREAEMRNSILAQVLDQSARARLSNLALVKPEKTKAVENYLIQMARYGQLSEKVSEQGLIEILKKVSQQTEKTTTVKFNRRKVMDSDEDDDY</sequence>
<comment type="function">
    <text>May function in the process of apoptosis.</text>
</comment>
<comment type="interaction">
    <interactant intactId="EBI-712290">
        <id>O14737</id>
    </interactant>
    <interactant intactId="EBI-79165">
        <id>Q9NRD5</id>
        <label>PICK1</label>
    </interactant>
    <organismsDiffer>false</organismsDiffer>
    <experiments>3</experiments>
</comment>
<comment type="interaction">
    <interactant intactId="EBI-712290">
        <id>O14737</id>
    </interactant>
    <interactant intactId="EBI-2339393">
        <id>Q9NS91</id>
        <label>RAD18</label>
    </interactant>
    <organismsDiffer>false</organismsDiffer>
    <experiments>3</experiments>
</comment>
<comment type="interaction">
    <interactant intactId="EBI-712290">
        <id>O14737</id>
    </interactant>
    <interactant intactId="EBI-17716262">
        <id>Q9UPQ4-2</id>
        <label>TRIM35</label>
    </interactant>
    <organismsDiffer>false</organismsDiffer>
    <experiments>3</experiments>
</comment>
<comment type="alternative products">
    <event type="alternative splicing"/>
    <isoform>
        <id>O14737-1</id>
        <name>1</name>
        <sequence type="displayed"/>
    </isoform>
    <isoform>
        <id>O14737-2</id>
        <name>2</name>
        <sequence type="described" ref="VSP_056203"/>
    </isoform>
</comment>
<comment type="tissue specificity">
    <text>Widely expressed. Highest levels in heart, testis, kidney, pituitary gland, adrenal gland and placenta.</text>
</comment>
<comment type="developmental stage">
    <text>Expression in fetal tissues is significantly lower than in adult tissues.</text>
</comment>
<comment type="induction">
    <text>Activated in cells undergoing apoptosis.</text>
</comment>
<comment type="similarity">
    <text evidence="4">Belongs to the PDCD5 family.</text>
</comment>
<proteinExistence type="evidence at protein level"/>
<organism>
    <name type="scientific">Homo sapiens</name>
    <name type="common">Human</name>
    <dbReference type="NCBI Taxonomy" id="9606"/>
    <lineage>
        <taxon>Eukaryota</taxon>
        <taxon>Metazoa</taxon>
        <taxon>Chordata</taxon>
        <taxon>Craniata</taxon>
        <taxon>Vertebrata</taxon>
        <taxon>Euteleostomi</taxon>
        <taxon>Mammalia</taxon>
        <taxon>Eutheria</taxon>
        <taxon>Euarchontoglires</taxon>
        <taxon>Primates</taxon>
        <taxon>Haplorrhini</taxon>
        <taxon>Catarrhini</taxon>
        <taxon>Hominidae</taxon>
        <taxon>Homo</taxon>
    </lineage>
</organism>
<feature type="initiator methionine" description="Removed" evidence="2 8 13 14">
    <location>
        <position position="1"/>
    </location>
</feature>
<feature type="chain" id="PRO_0000121545" description="Programmed cell death protein 5">
    <location>
        <begin position="2"/>
        <end position="125"/>
    </location>
</feature>
<feature type="region of interest" description="Disordered" evidence="1">
    <location>
        <begin position="16"/>
        <end position="36"/>
    </location>
</feature>
<feature type="modified residue" description="N-acetylalanine" evidence="8 13 14">
    <location>
        <position position="2"/>
    </location>
</feature>
<feature type="modified residue" description="Phosphoserine" evidence="15">
    <location>
        <position position="51"/>
    </location>
</feature>
<feature type="modified residue" description="N6-acetyllysine" evidence="9">
    <location>
        <position position="63"/>
    </location>
</feature>
<feature type="modified residue" description="Phosphoserine" evidence="5 6 7 10 11 12 15 16">
    <location>
        <position position="119"/>
    </location>
</feature>
<feature type="splice variant" id="VSP_056203" description="In isoform 2." evidence="3">
    <original>EQGLIEILKKVSQQTEKTTTVKFNRRKVMDSDEDDDY</original>
    <variation>LDSLEELYCYLLYQNMASKGQLHLHWITEFLLTLRRNCWRE</variation>
    <location>
        <begin position="89"/>
        <end position="125"/>
    </location>
</feature>
<feature type="sequence conflict" description="In Ref. 4; CAG33215." evidence="4" ref="4">
    <original>E</original>
    <variation>K</variation>
    <location>
        <position position="104"/>
    </location>
</feature>
<feature type="helix" evidence="17">
    <location>
        <begin position="2"/>
        <end position="19"/>
    </location>
</feature>
<feature type="helix" evidence="18">
    <location>
        <begin position="26"/>
        <end position="47"/>
    </location>
</feature>
<feature type="helix" evidence="18">
    <location>
        <begin position="50"/>
        <end position="62"/>
    </location>
</feature>
<feature type="helix" evidence="18">
    <location>
        <begin position="64"/>
        <end position="80"/>
    </location>
</feature>
<feature type="helix" evidence="18">
    <location>
        <begin position="89"/>
        <end position="99"/>
    </location>
</feature>
<feature type="strand" evidence="19">
    <location>
        <begin position="100"/>
        <end position="102"/>
    </location>
</feature>
<dbReference type="EMBL" id="AF014955">
    <property type="protein sequence ID" value="AAD11579.1"/>
    <property type="molecule type" value="mRNA"/>
</dbReference>
<dbReference type="EMBL" id="BT006694">
    <property type="protein sequence ID" value="AAP35340.1"/>
    <property type="molecule type" value="mRNA"/>
</dbReference>
<dbReference type="EMBL" id="AK293486">
    <property type="protein sequence ID" value="BAG56975.1"/>
    <property type="molecule type" value="mRNA"/>
</dbReference>
<dbReference type="EMBL" id="CR456934">
    <property type="protein sequence ID" value="CAG33215.1"/>
    <property type="molecule type" value="mRNA"/>
</dbReference>
<dbReference type="EMBL" id="AC008474">
    <property type="status" value="NOT_ANNOTATED_CDS"/>
    <property type="molecule type" value="Genomic_DNA"/>
</dbReference>
<dbReference type="EMBL" id="BC015519">
    <property type="protein sequence ID" value="AAH15519.1"/>
    <property type="molecule type" value="mRNA"/>
</dbReference>
<dbReference type="CCDS" id="CCDS12423.1">
    <molecule id="O14737-1"/>
</dbReference>
<dbReference type="PIR" id="JG0192">
    <property type="entry name" value="JG0192"/>
</dbReference>
<dbReference type="RefSeq" id="NP_004699.1">
    <molecule id="O14737-1"/>
    <property type="nucleotide sequence ID" value="NM_004708.4"/>
</dbReference>
<dbReference type="RefSeq" id="XP_005259449.1">
    <molecule id="O14737-2"/>
    <property type="nucleotide sequence ID" value="XM_005259392.6"/>
</dbReference>
<dbReference type="RefSeq" id="XP_054178556.1">
    <molecule id="O14737-2"/>
    <property type="nucleotide sequence ID" value="XM_054322581.1"/>
</dbReference>
<dbReference type="PDB" id="1YYB">
    <property type="method" value="NMR"/>
    <property type="chains" value="A=1-26"/>
</dbReference>
<dbReference type="PDB" id="2CRU">
    <property type="method" value="NMR"/>
    <property type="chains" value="A=9-113"/>
</dbReference>
<dbReference type="PDB" id="2K6B">
    <property type="method" value="NMR"/>
    <property type="chains" value="A=2-112"/>
</dbReference>
<dbReference type="PDBsum" id="1YYB"/>
<dbReference type="PDBsum" id="2CRU"/>
<dbReference type="PDBsum" id="2K6B"/>
<dbReference type="BMRB" id="O14737"/>
<dbReference type="SMR" id="O14737"/>
<dbReference type="BioGRID" id="114588">
    <property type="interactions" value="99"/>
</dbReference>
<dbReference type="DIP" id="DIP-50602N"/>
<dbReference type="FunCoup" id="O14737">
    <property type="interactions" value="2452"/>
</dbReference>
<dbReference type="IntAct" id="O14737">
    <property type="interactions" value="58"/>
</dbReference>
<dbReference type="MINT" id="O14737"/>
<dbReference type="STRING" id="9606.ENSP00000466214"/>
<dbReference type="GlyGen" id="O14737">
    <property type="glycosylation" value="1 site, 1 O-linked glycan (1 site)"/>
</dbReference>
<dbReference type="iPTMnet" id="O14737"/>
<dbReference type="MetOSite" id="O14737"/>
<dbReference type="PhosphoSitePlus" id="O14737"/>
<dbReference type="BioMuta" id="PDCD5"/>
<dbReference type="jPOST" id="O14737"/>
<dbReference type="MassIVE" id="O14737"/>
<dbReference type="PaxDb" id="9606-ENSP00000466214"/>
<dbReference type="PeptideAtlas" id="O14737"/>
<dbReference type="ProteomicsDB" id="3922"/>
<dbReference type="ProteomicsDB" id="48199">
    <molecule id="O14737-1"/>
</dbReference>
<dbReference type="Pumba" id="O14737"/>
<dbReference type="TopDownProteomics" id="O14737-1">
    <molecule id="O14737-1"/>
</dbReference>
<dbReference type="Antibodypedia" id="15598">
    <property type="antibodies" value="242 antibodies from 31 providers"/>
</dbReference>
<dbReference type="DNASU" id="9141"/>
<dbReference type="Ensembl" id="ENST00000419343.7">
    <molecule id="O14737-2"/>
    <property type="protein sequence ID" value="ENSP00000476525.1"/>
    <property type="gene ID" value="ENSG00000105185.12"/>
</dbReference>
<dbReference type="Ensembl" id="ENST00000590247.7">
    <molecule id="O14737-1"/>
    <property type="protein sequence ID" value="ENSP00000466214.1"/>
    <property type="gene ID" value="ENSG00000105185.12"/>
</dbReference>
<dbReference type="GeneID" id="9141"/>
<dbReference type="KEGG" id="hsa:9141"/>
<dbReference type="MANE-Select" id="ENST00000590247.7">
    <property type="protein sequence ID" value="ENSP00000466214.1"/>
    <property type="RefSeq nucleotide sequence ID" value="NM_004708.4"/>
    <property type="RefSeq protein sequence ID" value="NP_004699.1"/>
</dbReference>
<dbReference type="UCSC" id="uc002ntl.4">
    <molecule id="O14737-1"/>
    <property type="organism name" value="human"/>
</dbReference>
<dbReference type="AGR" id="HGNC:8764"/>
<dbReference type="CTD" id="9141"/>
<dbReference type="DisGeNET" id="9141"/>
<dbReference type="GeneCards" id="PDCD5"/>
<dbReference type="HGNC" id="HGNC:8764">
    <property type="gene designation" value="PDCD5"/>
</dbReference>
<dbReference type="HPA" id="ENSG00000105185">
    <property type="expression patterns" value="Low tissue specificity"/>
</dbReference>
<dbReference type="MIM" id="604583">
    <property type="type" value="gene"/>
</dbReference>
<dbReference type="neXtProt" id="NX_O14737"/>
<dbReference type="OpenTargets" id="ENSG00000105185"/>
<dbReference type="PharmGKB" id="PA33114"/>
<dbReference type="VEuPathDB" id="HostDB:ENSG00000105185"/>
<dbReference type="eggNOG" id="KOG3431">
    <property type="taxonomic scope" value="Eukaryota"/>
</dbReference>
<dbReference type="GeneTree" id="ENSGT00390000011085"/>
<dbReference type="InParanoid" id="O14737"/>
<dbReference type="OMA" id="MQYEMQK"/>
<dbReference type="OrthoDB" id="10252486at2759"/>
<dbReference type="PAN-GO" id="O14737">
    <property type="GO annotations" value="2 GO annotations based on evolutionary models"/>
</dbReference>
<dbReference type="PhylomeDB" id="O14737"/>
<dbReference type="PathwayCommons" id="O14737"/>
<dbReference type="SignaLink" id="O14737"/>
<dbReference type="SIGNOR" id="O14737"/>
<dbReference type="BioGRID-ORCS" id="9141">
    <property type="hits" value="347 hits in 1159 CRISPR screens"/>
</dbReference>
<dbReference type="ChiTaRS" id="PDCD5">
    <property type="organism name" value="human"/>
</dbReference>
<dbReference type="EvolutionaryTrace" id="O14737"/>
<dbReference type="GeneWiki" id="PDCD5"/>
<dbReference type="GenomeRNAi" id="9141"/>
<dbReference type="Pharos" id="O14737">
    <property type="development level" value="Tbio"/>
</dbReference>
<dbReference type="PRO" id="PR:O14737"/>
<dbReference type="Proteomes" id="UP000005640">
    <property type="component" value="Chromosome 19"/>
</dbReference>
<dbReference type="RNAct" id="O14737">
    <property type="molecule type" value="protein"/>
</dbReference>
<dbReference type="Bgee" id="ENSG00000105185">
    <property type="expression patterns" value="Expressed in right testis and 197 other cell types or tissues"/>
</dbReference>
<dbReference type="ExpressionAtlas" id="O14737">
    <property type="expression patterns" value="baseline and differential"/>
</dbReference>
<dbReference type="GO" id="GO:0005737">
    <property type="term" value="C:cytoplasm"/>
    <property type="evidence" value="ECO:0007005"/>
    <property type="project" value="UniProtKB"/>
</dbReference>
<dbReference type="GO" id="GO:0005829">
    <property type="term" value="C:cytosol"/>
    <property type="evidence" value="ECO:0000318"/>
    <property type="project" value="GO_Central"/>
</dbReference>
<dbReference type="GO" id="GO:0070062">
    <property type="term" value="C:extracellular exosome"/>
    <property type="evidence" value="ECO:0007005"/>
    <property type="project" value="UniProtKB"/>
</dbReference>
<dbReference type="GO" id="GO:0005634">
    <property type="term" value="C:nucleus"/>
    <property type="evidence" value="ECO:0000314"/>
    <property type="project" value="UniProtKB"/>
</dbReference>
<dbReference type="GO" id="GO:0010698">
    <property type="term" value="F:acetyltransferase activator activity"/>
    <property type="evidence" value="ECO:0000314"/>
    <property type="project" value="UniProtKB"/>
</dbReference>
<dbReference type="GO" id="GO:0048487">
    <property type="term" value="F:beta-tubulin binding"/>
    <property type="evidence" value="ECO:0000353"/>
    <property type="project" value="UniProtKB"/>
</dbReference>
<dbReference type="GO" id="GO:0003677">
    <property type="term" value="F:DNA binding"/>
    <property type="evidence" value="ECO:0007669"/>
    <property type="project" value="InterPro"/>
</dbReference>
<dbReference type="GO" id="GO:0008201">
    <property type="term" value="F:heparin binding"/>
    <property type="evidence" value="ECO:0000314"/>
    <property type="project" value="UniProtKB"/>
</dbReference>
<dbReference type="GO" id="GO:0006915">
    <property type="term" value="P:apoptotic process"/>
    <property type="evidence" value="ECO:0007669"/>
    <property type="project" value="UniProtKB-KW"/>
</dbReference>
<dbReference type="GO" id="GO:0071560">
    <property type="term" value="P:cellular response to transforming growth factor beta stimulus"/>
    <property type="evidence" value="ECO:0000314"/>
    <property type="project" value="UniProtKB"/>
</dbReference>
<dbReference type="GO" id="GO:1903645">
    <property type="term" value="P:negative regulation of chaperone-mediated protein folding"/>
    <property type="evidence" value="ECO:0000315"/>
    <property type="project" value="UniProtKB"/>
</dbReference>
<dbReference type="GO" id="GO:0043065">
    <property type="term" value="P:positive regulation of apoptotic process"/>
    <property type="evidence" value="ECO:0000315"/>
    <property type="project" value="FlyBase"/>
</dbReference>
<dbReference type="GO" id="GO:0010628">
    <property type="term" value="P:positive regulation of gene expression"/>
    <property type="evidence" value="ECO:0000314"/>
    <property type="project" value="UniProtKB"/>
</dbReference>
<dbReference type="GO" id="GO:0042981">
    <property type="term" value="P:regulation of apoptotic process"/>
    <property type="evidence" value="ECO:0000315"/>
    <property type="project" value="UniProtKB"/>
</dbReference>
<dbReference type="FunFam" id="1.10.8.140:FF:000001">
    <property type="entry name" value="Programmed cell death protein 5"/>
    <property type="match status" value="1"/>
</dbReference>
<dbReference type="Gene3D" id="1.10.8.140">
    <property type="entry name" value="PDCD5-like"/>
    <property type="match status" value="1"/>
</dbReference>
<dbReference type="InterPro" id="IPR002836">
    <property type="entry name" value="PDCD5-like"/>
</dbReference>
<dbReference type="InterPro" id="IPR036883">
    <property type="entry name" value="PDCD5-like_sf"/>
</dbReference>
<dbReference type="PANTHER" id="PTHR10840">
    <property type="entry name" value="PROGRAMMED CELL DEATH PROTEIN 5"/>
    <property type="match status" value="1"/>
</dbReference>
<dbReference type="PANTHER" id="PTHR10840:SF0">
    <property type="entry name" value="PROGRAMMED CELL DEATH PROTEIN 5"/>
    <property type="match status" value="1"/>
</dbReference>
<dbReference type="Pfam" id="PF01984">
    <property type="entry name" value="dsDNA_bind"/>
    <property type="match status" value="1"/>
</dbReference>
<dbReference type="PIRSF" id="PIRSF015730">
    <property type="entry name" value="TFAR19"/>
    <property type="match status" value="1"/>
</dbReference>
<dbReference type="SUPFAM" id="SSF46950">
    <property type="entry name" value="Double-stranded DNA-binding domain"/>
    <property type="match status" value="1"/>
</dbReference>
<keyword id="KW-0002">3D-structure</keyword>
<keyword id="KW-0007">Acetylation</keyword>
<keyword id="KW-0025">Alternative splicing</keyword>
<keyword id="KW-0053">Apoptosis</keyword>
<keyword id="KW-0903">Direct protein sequencing</keyword>
<keyword id="KW-0597">Phosphoprotein</keyword>
<keyword id="KW-1267">Proteomics identification</keyword>
<keyword id="KW-1185">Reference proteome</keyword>
<gene>
    <name type="primary">PDCD5</name>
    <name type="synonym">TFAR19</name>
</gene>